<dbReference type="EMBL" id="AE000520">
    <property type="protein sequence ID" value="AAC65167.1"/>
    <property type="molecule type" value="Genomic_DNA"/>
</dbReference>
<dbReference type="PIR" id="F71358">
    <property type="entry name" value="F71358"/>
</dbReference>
<dbReference type="RefSeq" id="WP_010881624.1">
    <property type="nucleotide sequence ID" value="NC_000919.1"/>
</dbReference>
<dbReference type="IntAct" id="O83207">
    <property type="interactions" value="2"/>
</dbReference>
<dbReference type="STRING" id="243276.TP_0177"/>
<dbReference type="EnsemblBacteria" id="AAC65167">
    <property type="protein sequence ID" value="AAC65167"/>
    <property type="gene ID" value="TP_0177"/>
</dbReference>
<dbReference type="KEGG" id="tpa:TP_0177"/>
<dbReference type="HOGENOM" id="CLU_037954_1_0_12"/>
<dbReference type="OrthoDB" id="304932at2"/>
<dbReference type="Proteomes" id="UP000000811">
    <property type="component" value="Chromosome"/>
</dbReference>
<dbReference type="InterPro" id="IPR002826">
    <property type="entry name" value="MptE-like"/>
</dbReference>
<dbReference type="Pfam" id="PF01973">
    <property type="entry name" value="MptE-like"/>
    <property type="match status" value="1"/>
</dbReference>
<gene>
    <name type="ordered locus">TP_0177</name>
</gene>
<proteinExistence type="predicted"/>
<name>Y177_TREPA</name>
<reference key="1">
    <citation type="journal article" date="1998" name="Science">
        <title>Complete genome sequence of Treponema pallidum, the syphilis spirochete.</title>
        <authorList>
            <person name="Fraser C.M."/>
            <person name="Norris S.J."/>
            <person name="Weinstock G.M."/>
            <person name="White O."/>
            <person name="Sutton G.G."/>
            <person name="Dodson R.J."/>
            <person name="Gwinn M.L."/>
            <person name="Hickey E.K."/>
            <person name="Clayton R.A."/>
            <person name="Ketchum K.A."/>
            <person name="Sodergren E."/>
            <person name="Hardham J.M."/>
            <person name="McLeod M.P."/>
            <person name="Salzberg S.L."/>
            <person name="Peterson J.D."/>
            <person name="Khalak H.G."/>
            <person name="Richardson D.L."/>
            <person name="Howell J.K."/>
            <person name="Chidambaram M."/>
            <person name="Utterback T.R."/>
            <person name="McDonald L.A."/>
            <person name="Artiach P."/>
            <person name="Bowman C."/>
            <person name="Cotton M.D."/>
            <person name="Fujii C."/>
            <person name="Garland S.A."/>
            <person name="Hatch B."/>
            <person name="Horst K."/>
            <person name="Roberts K.M."/>
            <person name="Sandusky M."/>
            <person name="Weidman J.F."/>
            <person name="Smith H.O."/>
            <person name="Venter J.C."/>
        </authorList>
    </citation>
    <scope>NUCLEOTIDE SEQUENCE [LARGE SCALE GENOMIC DNA]</scope>
    <source>
        <strain>Nichols</strain>
    </source>
</reference>
<organism>
    <name type="scientific">Treponema pallidum (strain Nichols)</name>
    <dbReference type="NCBI Taxonomy" id="243276"/>
    <lineage>
        <taxon>Bacteria</taxon>
        <taxon>Pseudomonadati</taxon>
        <taxon>Spirochaetota</taxon>
        <taxon>Spirochaetia</taxon>
        <taxon>Spirochaetales</taxon>
        <taxon>Treponemataceae</taxon>
        <taxon>Treponema</taxon>
    </lineage>
</organism>
<feature type="chain" id="PRO_0000202208" description="Uncharacterized protein TP_0177">
    <location>
        <begin position="1"/>
        <end position="436"/>
    </location>
</feature>
<accession>O83207</accession>
<protein>
    <recommendedName>
        <fullName>Uncharacterized protein TP_0177</fullName>
    </recommendedName>
</protein>
<sequence>MSRTPRSFCGHAFHMQSLSQFDTQTMRSLHPISSGTQSGDQTARSLHSFLINHIPDELLGQTAFVPWEPANRIWRAQAQSTWQEITYTIKVIQSEIATRIYFGKRWLLNTLRNVFFLERPVRVCLTAPEVLCVAAGFGLEQITRVGLPIVAVSSALQALLYRNISPDICMSTDGSFWAAEHFPPAPTLPVLFPLEACIPPRVFKYSPISLLNYHSHTEHFFLQHLHIPSVSAQRHGSVMGTALEYLLQCGVHSIYLAGLDLHPGKGFQHARPHASFKRFNPKRTEPLATCIAGNFDNRSLETYAHWFYSLPQEKIQKLTRLNTEHAPPSNVRTITYEDFSQHAFAKKDTFTFSEGPPISRIHKKAVLRHYFERITRSAHHARIASSIASSGIEKEAFEFLAYAELLHLRKNPSQGTQTLIHKVRHEIVQLRNKLSI</sequence>
<keyword id="KW-1185">Reference proteome</keyword>